<name>GCSP_LEPIN</name>
<comment type="function">
    <text evidence="1">The glycine cleavage system catalyzes the degradation of glycine. The P protein binds the alpha-amino group of glycine through its pyridoxal phosphate cofactor; CO(2) is released and the remaining methylamine moiety is then transferred to the lipoamide cofactor of the H protein.</text>
</comment>
<comment type="catalytic activity">
    <reaction evidence="1">
        <text>N(6)-[(R)-lipoyl]-L-lysyl-[glycine-cleavage complex H protein] + glycine + H(+) = N(6)-[(R)-S(8)-aminomethyldihydrolipoyl]-L-lysyl-[glycine-cleavage complex H protein] + CO2</text>
        <dbReference type="Rhea" id="RHEA:24304"/>
        <dbReference type="Rhea" id="RHEA-COMP:10494"/>
        <dbReference type="Rhea" id="RHEA-COMP:10495"/>
        <dbReference type="ChEBI" id="CHEBI:15378"/>
        <dbReference type="ChEBI" id="CHEBI:16526"/>
        <dbReference type="ChEBI" id="CHEBI:57305"/>
        <dbReference type="ChEBI" id="CHEBI:83099"/>
        <dbReference type="ChEBI" id="CHEBI:83143"/>
        <dbReference type="EC" id="1.4.4.2"/>
    </reaction>
</comment>
<comment type="cofactor">
    <cofactor evidence="1">
        <name>pyridoxal 5'-phosphate</name>
        <dbReference type="ChEBI" id="CHEBI:597326"/>
    </cofactor>
</comment>
<comment type="subunit">
    <text evidence="1">The glycine cleavage system is composed of four proteins: P, T, L and H.</text>
</comment>
<comment type="similarity">
    <text evidence="1">Belongs to the GcvP family.</text>
</comment>
<dbReference type="EC" id="1.4.4.2" evidence="1"/>
<dbReference type="EMBL" id="AE010300">
    <property type="protein sequence ID" value="AAN47559.1"/>
    <property type="molecule type" value="Genomic_DNA"/>
</dbReference>
<dbReference type="RefSeq" id="NP_710541.1">
    <property type="nucleotide sequence ID" value="NC_004342.2"/>
</dbReference>
<dbReference type="RefSeq" id="WP_001089349.1">
    <property type="nucleotide sequence ID" value="NC_004342.2"/>
</dbReference>
<dbReference type="SMR" id="Q8F937"/>
<dbReference type="FunCoup" id="Q8F937">
    <property type="interactions" value="402"/>
</dbReference>
<dbReference type="STRING" id="189518.LA_0360"/>
<dbReference type="PaxDb" id="189518-LA_0360"/>
<dbReference type="EnsemblBacteria" id="AAN47559">
    <property type="protein sequence ID" value="AAN47559"/>
    <property type="gene ID" value="LA_0360"/>
</dbReference>
<dbReference type="KEGG" id="lil:LA_0360"/>
<dbReference type="PATRIC" id="fig|189518.3.peg.365"/>
<dbReference type="HOGENOM" id="CLU_004620_3_2_12"/>
<dbReference type="InParanoid" id="Q8F937"/>
<dbReference type="OrthoDB" id="9801272at2"/>
<dbReference type="Proteomes" id="UP000001408">
    <property type="component" value="Chromosome I"/>
</dbReference>
<dbReference type="GO" id="GO:0005829">
    <property type="term" value="C:cytosol"/>
    <property type="evidence" value="ECO:0000318"/>
    <property type="project" value="GO_Central"/>
</dbReference>
<dbReference type="GO" id="GO:0005960">
    <property type="term" value="C:glycine cleavage complex"/>
    <property type="evidence" value="ECO:0000318"/>
    <property type="project" value="GO_Central"/>
</dbReference>
<dbReference type="GO" id="GO:0016594">
    <property type="term" value="F:glycine binding"/>
    <property type="evidence" value="ECO:0000318"/>
    <property type="project" value="GO_Central"/>
</dbReference>
<dbReference type="GO" id="GO:0004375">
    <property type="term" value="F:glycine dehydrogenase (decarboxylating) activity"/>
    <property type="evidence" value="ECO:0000318"/>
    <property type="project" value="GO_Central"/>
</dbReference>
<dbReference type="GO" id="GO:0030170">
    <property type="term" value="F:pyridoxal phosphate binding"/>
    <property type="evidence" value="ECO:0000318"/>
    <property type="project" value="GO_Central"/>
</dbReference>
<dbReference type="GO" id="GO:0019464">
    <property type="term" value="P:glycine decarboxylation via glycine cleavage system"/>
    <property type="evidence" value="ECO:0000318"/>
    <property type="project" value="GO_Central"/>
</dbReference>
<dbReference type="CDD" id="cd00613">
    <property type="entry name" value="GDC-P"/>
    <property type="match status" value="2"/>
</dbReference>
<dbReference type="FunFam" id="3.90.1150.10:FF:000025">
    <property type="entry name" value="Glycine cleavage system P protein"/>
    <property type="match status" value="1"/>
</dbReference>
<dbReference type="FunFam" id="3.40.640.10:FF:000005">
    <property type="entry name" value="Glycine dehydrogenase (decarboxylating), mitochondrial"/>
    <property type="match status" value="1"/>
</dbReference>
<dbReference type="FunFam" id="3.90.1150.10:FF:000007">
    <property type="entry name" value="Glycine dehydrogenase (decarboxylating), mitochondrial"/>
    <property type="match status" value="1"/>
</dbReference>
<dbReference type="FunFam" id="3.40.640.10:FF:000007">
    <property type="entry name" value="glycine dehydrogenase (Decarboxylating), mitochondrial"/>
    <property type="match status" value="1"/>
</dbReference>
<dbReference type="Gene3D" id="3.90.1150.10">
    <property type="entry name" value="Aspartate Aminotransferase, domain 1"/>
    <property type="match status" value="2"/>
</dbReference>
<dbReference type="Gene3D" id="3.40.640.10">
    <property type="entry name" value="Type I PLP-dependent aspartate aminotransferase-like (Major domain)"/>
    <property type="match status" value="2"/>
</dbReference>
<dbReference type="HAMAP" id="MF_00711">
    <property type="entry name" value="GcvP"/>
    <property type="match status" value="1"/>
</dbReference>
<dbReference type="InterPro" id="IPR003437">
    <property type="entry name" value="GcvP"/>
</dbReference>
<dbReference type="InterPro" id="IPR049316">
    <property type="entry name" value="GDC-P_C"/>
</dbReference>
<dbReference type="InterPro" id="IPR049315">
    <property type="entry name" value="GDC-P_N"/>
</dbReference>
<dbReference type="InterPro" id="IPR020581">
    <property type="entry name" value="GDC_P"/>
</dbReference>
<dbReference type="InterPro" id="IPR015424">
    <property type="entry name" value="PyrdxlP-dep_Trfase"/>
</dbReference>
<dbReference type="InterPro" id="IPR015421">
    <property type="entry name" value="PyrdxlP-dep_Trfase_major"/>
</dbReference>
<dbReference type="InterPro" id="IPR015422">
    <property type="entry name" value="PyrdxlP-dep_Trfase_small"/>
</dbReference>
<dbReference type="NCBIfam" id="TIGR00461">
    <property type="entry name" value="gcvP"/>
    <property type="match status" value="1"/>
</dbReference>
<dbReference type="NCBIfam" id="NF003346">
    <property type="entry name" value="PRK04366.1"/>
    <property type="match status" value="1"/>
</dbReference>
<dbReference type="PANTHER" id="PTHR11773:SF1">
    <property type="entry name" value="GLYCINE DEHYDROGENASE (DECARBOXYLATING), MITOCHONDRIAL"/>
    <property type="match status" value="1"/>
</dbReference>
<dbReference type="PANTHER" id="PTHR11773">
    <property type="entry name" value="GLYCINE DEHYDROGENASE, DECARBOXYLATING"/>
    <property type="match status" value="1"/>
</dbReference>
<dbReference type="Pfam" id="PF21478">
    <property type="entry name" value="GcvP2_C"/>
    <property type="match status" value="1"/>
</dbReference>
<dbReference type="Pfam" id="PF02347">
    <property type="entry name" value="GDC-P"/>
    <property type="match status" value="2"/>
</dbReference>
<dbReference type="SUPFAM" id="SSF53383">
    <property type="entry name" value="PLP-dependent transferases"/>
    <property type="match status" value="2"/>
</dbReference>
<feature type="chain" id="PRO_0000166917" description="Glycine dehydrogenase (decarboxylating)">
    <location>
        <begin position="1"/>
        <end position="964"/>
    </location>
</feature>
<feature type="region of interest" description="Disordered" evidence="2">
    <location>
        <begin position="1"/>
        <end position="21"/>
    </location>
</feature>
<feature type="compositionally biased region" description="Polar residues" evidence="2">
    <location>
        <begin position="1"/>
        <end position="11"/>
    </location>
</feature>
<feature type="modified residue" description="N6-(pyridoxal phosphate)lysine" evidence="1">
    <location>
        <position position="713"/>
    </location>
</feature>
<organism>
    <name type="scientific">Leptospira interrogans serogroup Icterohaemorrhagiae serovar Lai (strain 56601)</name>
    <dbReference type="NCBI Taxonomy" id="189518"/>
    <lineage>
        <taxon>Bacteria</taxon>
        <taxon>Pseudomonadati</taxon>
        <taxon>Spirochaetota</taxon>
        <taxon>Spirochaetia</taxon>
        <taxon>Leptospirales</taxon>
        <taxon>Leptospiraceae</taxon>
        <taxon>Leptospira</taxon>
    </lineage>
</organism>
<reference key="1">
    <citation type="journal article" date="2003" name="Nature">
        <title>Unique physiological and pathogenic features of Leptospira interrogans revealed by whole-genome sequencing.</title>
        <authorList>
            <person name="Ren S.-X."/>
            <person name="Fu G."/>
            <person name="Jiang X.-G."/>
            <person name="Zeng R."/>
            <person name="Miao Y.-G."/>
            <person name="Xu H."/>
            <person name="Zhang Y.-X."/>
            <person name="Xiong H."/>
            <person name="Lu G."/>
            <person name="Lu L.-F."/>
            <person name="Jiang H.-Q."/>
            <person name="Jia J."/>
            <person name="Tu Y.-F."/>
            <person name="Jiang J.-X."/>
            <person name="Gu W.-Y."/>
            <person name="Zhang Y.-Q."/>
            <person name="Cai Z."/>
            <person name="Sheng H.-H."/>
            <person name="Yin H.-F."/>
            <person name="Zhang Y."/>
            <person name="Zhu G.-F."/>
            <person name="Wan M."/>
            <person name="Huang H.-L."/>
            <person name="Qian Z."/>
            <person name="Wang S.-Y."/>
            <person name="Ma W."/>
            <person name="Yao Z.-J."/>
            <person name="Shen Y."/>
            <person name="Qiang B.-Q."/>
            <person name="Xia Q.-C."/>
            <person name="Guo X.-K."/>
            <person name="Danchin A."/>
            <person name="Saint Girons I."/>
            <person name="Somerville R.L."/>
            <person name="Wen Y.-M."/>
            <person name="Shi M.-H."/>
            <person name="Chen Z."/>
            <person name="Xu J.-G."/>
            <person name="Zhao G.-P."/>
        </authorList>
    </citation>
    <scope>NUCLEOTIDE SEQUENCE [LARGE SCALE GENOMIC DNA]</scope>
    <source>
        <strain>56601</strain>
    </source>
</reference>
<evidence type="ECO:0000255" key="1">
    <source>
        <dbReference type="HAMAP-Rule" id="MF_00711"/>
    </source>
</evidence>
<evidence type="ECO:0000256" key="2">
    <source>
        <dbReference type="SAM" id="MobiDB-lite"/>
    </source>
</evidence>
<sequence>MNSTLQNQTKTNLEKVGTDPLDTFPRRHIGPNLQQTAEMLKELGLSSVEELIDKAVPVGIRLKKSLDLPKASTEHKILQNLKGIASQNQVFRSYIGAGYHSCIIPGVIQRNILENPGWYTAYTPYQAEISQGRLEALLNFQTMIIDLTGLEISNASLLDEGTAAAEAMFLAYSVRKNETAKKFFVSELCHPQTIDVVVTRANPLGIEVQIGNHESIELNEDFFGVLLQYPATDGKVIDYTSFIQRSHNVGAISTVAADLLALTLLKSPGEMGADIAVGSSQRFGLPLGFGGPHAGYFATKDEFKRSMPGRLIGVSKDSQGNSGLRLSLQTREQHIRRDKATSNICTAQVLLAVISSMYAIYHGPEGLKNIATRIYKFTSIFANVLKNAGFSITNEFFFDTITIQAGAKVQEILNRAYSKKINFREYKDGKIGITLDETVNLEDLKDLLEIFEIKNTDIEKLFVDVSNVPDSFKRKTSYLTHPVFQSHHTETKMLRYIRKLESRDLSLTTSMIPLGSCTMKLNATTEMYPVTWPEFGAIHPFAPADQTKGYKIIFEQLEKWLCEITGFAGVSLQPNAGSQGEYAGLLAIRRYHESRNESYRNVCLIPISAHGTNPASAAMAGFQVVVVSCDPNGNVDLEDLKAKAEEHKKDLAALMITYPSTHGVFEESVKEICQIVHSCGGQVYMDGANMNAQVGLTSPGEIGADVCHLNLHKTFCIPHGGGGPGVGPIGVAKHLVPFLPGHVLVNNATGNEHGAVSAAPWGSASIVLISWVYIALMGSEGLTNATRNSILNANYIAKRLEKVYPVLYKGKNGFVAHECILDLRPFKKSAGIEVEDVAKRLIDYGFHAPTMSFPVPGTLMIEPTESESLEELDRFCEAMLLIYQEILDVQNGTLDKTDNPLKNSPHTAAMVTSDRWDHLYPRERAAYPASWLKDHKFWPYVGRVDNVYGDRNLVCSCLPIESYQ</sequence>
<keyword id="KW-0560">Oxidoreductase</keyword>
<keyword id="KW-0663">Pyridoxal phosphate</keyword>
<keyword id="KW-1185">Reference proteome</keyword>
<gene>
    <name evidence="1" type="primary">gcvP</name>
    <name type="ordered locus">LA_0360</name>
</gene>
<accession>Q8F937</accession>
<protein>
    <recommendedName>
        <fullName evidence="1">Glycine dehydrogenase (decarboxylating)</fullName>
        <ecNumber evidence="1">1.4.4.2</ecNumber>
    </recommendedName>
    <alternativeName>
        <fullName evidence="1">Glycine cleavage system P-protein</fullName>
    </alternativeName>
    <alternativeName>
        <fullName evidence="1">Glycine decarboxylase</fullName>
    </alternativeName>
    <alternativeName>
        <fullName evidence="1">Glycine dehydrogenase (aminomethyl-transferring)</fullName>
    </alternativeName>
</protein>
<proteinExistence type="inferred from homology"/>